<protein>
    <recommendedName>
        <fullName evidence="1">Large ribosomal subunit protein bL17</fullName>
    </recommendedName>
    <alternativeName>
        <fullName evidence="2">50S ribosomal protein L17</fullName>
    </alternativeName>
</protein>
<dbReference type="EMBL" id="CP000141">
    <property type="protein sequence ID" value="ABB15473.1"/>
    <property type="molecule type" value="Genomic_DNA"/>
</dbReference>
<dbReference type="RefSeq" id="WP_011345162.1">
    <property type="nucleotide sequence ID" value="NC_007503.1"/>
</dbReference>
<dbReference type="SMR" id="Q3A9U5"/>
<dbReference type="FunCoup" id="Q3A9U5">
    <property type="interactions" value="401"/>
</dbReference>
<dbReference type="STRING" id="246194.CHY_2280"/>
<dbReference type="KEGG" id="chy:CHY_2280"/>
<dbReference type="eggNOG" id="COG0203">
    <property type="taxonomic scope" value="Bacteria"/>
</dbReference>
<dbReference type="HOGENOM" id="CLU_074407_2_2_9"/>
<dbReference type="InParanoid" id="Q3A9U5"/>
<dbReference type="OrthoDB" id="9809073at2"/>
<dbReference type="Proteomes" id="UP000002706">
    <property type="component" value="Chromosome"/>
</dbReference>
<dbReference type="GO" id="GO:0022625">
    <property type="term" value="C:cytosolic large ribosomal subunit"/>
    <property type="evidence" value="ECO:0007669"/>
    <property type="project" value="TreeGrafter"/>
</dbReference>
<dbReference type="GO" id="GO:0003735">
    <property type="term" value="F:structural constituent of ribosome"/>
    <property type="evidence" value="ECO:0007669"/>
    <property type="project" value="InterPro"/>
</dbReference>
<dbReference type="GO" id="GO:0006412">
    <property type="term" value="P:translation"/>
    <property type="evidence" value="ECO:0007669"/>
    <property type="project" value="UniProtKB-UniRule"/>
</dbReference>
<dbReference type="FunFam" id="3.90.1030.10:FF:000001">
    <property type="entry name" value="50S ribosomal protein L17"/>
    <property type="match status" value="1"/>
</dbReference>
<dbReference type="Gene3D" id="3.90.1030.10">
    <property type="entry name" value="Ribosomal protein L17"/>
    <property type="match status" value="1"/>
</dbReference>
<dbReference type="HAMAP" id="MF_01368">
    <property type="entry name" value="Ribosomal_bL17"/>
    <property type="match status" value="1"/>
</dbReference>
<dbReference type="InterPro" id="IPR000456">
    <property type="entry name" value="Ribosomal_bL17"/>
</dbReference>
<dbReference type="InterPro" id="IPR047859">
    <property type="entry name" value="Ribosomal_bL17_CS"/>
</dbReference>
<dbReference type="InterPro" id="IPR036373">
    <property type="entry name" value="Ribosomal_bL17_sf"/>
</dbReference>
<dbReference type="NCBIfam" id="TIGR00059">
    <property type="entry name" value="L17"/>
    <property type="match status" value="1"/>
</dbReference>
<dbReference type="PANTHER" id="PTHR14413:SF16">
    <property type="entry name" value="LARGE RIBOSOMAL SUBUNIT PROTEIN BL17M"/>
    <property type="match status" value="1"/>
</dbReference>
<dbReference type="PANTHER" id="PTHR14413">
    <property type="entry name" value="RIBOSOMAL PROTEIN L17"/>
    <property type="match status" value="1"/>
</dbReference>
<dbReference type="Pfam" id="PF01196">
    <property type="entry name" value="Ribosomal_L17"/>
    <property type="match status" value="1"/>
</dbReference>
<dbReference type="SUPFAM" id="SSF64263">
    <property type="entry name" value="Prokaryotic ribosomal protein L17"/>
    <property type="match status" value="1"/>
</dbReference>
<dbReference type="PROSITE" id="PS01167">
    <property type="entry name" value="RIBOSOMAL_L17"/>
    <property type="match status" value="1"/>
</dbReference>
<comment type="subunit">
    <text evidence="1">Part of the 50S ribosomal subunit. Contacts protein L32.</text>
</comment>
<comment type="similarity">
    <text evidence="1">Belongs to the bacterial ribosomal protein bL17 family.</text>
</comment>
<gene>
    <name evidence="1" type="primary">rplQ</name>
    <name type="ordered locus">CHY_2280</name>
</gene>
<feature type="chain" id="PRO_1000055793" description="Large ribosomal subunit protein bL17">
    <location>
        <begin position="1"/>
        <end position="112"/>
    </location>
</feature>
<keyword id="KW-1185">Reference proteome</keyword>
<keyword id="KW-0687">Ribonucleoprotein</keyword>
<keyword id="KW-0689">Ribosomal protein</keyword>
<proteinExistence type="inferred from homology"/>
<name>RL17_CARHZ</name>
<organism>
    <name type="scientific">Carboxydothermus hydrogenoformans (strain ATCC BAA-161 / DSM 6008 / Z-2901)</name>
    <dbReference type="NCBI Taxonomy" id="246194"/>
    <lineage>
        <taxon>Bacteria</taxon>
        <taxon>Bacillati</taxon>
        <taxon>Bacillota</taxon>
        <taxon>Clostridia</taxon>
        <taxon>Thermoanaerobacterales</taxon>
        <taxon>Thermoanaerobacteraceae</taxon>
        <taxon>Carboxydothermus</taxon>
    </lineage>
</organism>
<sequence>MYHYKLGRRKDHREAMLRNLVTSLLKEGKIITTEARGKSAKAVAEKLITLAKNDTLHNRRQALAYLYEENVVRKLFKEIGPKYADRPGGYTRIVKIGPRRGDGAMMVLVELL</sequence>
<reference key="1">
    <citation type="journal article" date="2005" name="PLoS Genet.">
        <title>Life in hot carbon monoxide: the complete genome sequence of Carboxydothermus hydrogenoformans Z-2901.</title>
        <authorList>
            <person name="Wu M."/>
            <person name="Ren Q."/>
            <person name="Durkin A.S."/>
            <person name="Daugherty S.C."/>
            <person name="Brinkac L.M."/>
            <person name="Dodson R.J."/>
            <person name="Madupu R."/>
            <person name="Sullivan S.A."/>
            <person name="Kolonay J.F."/>
            <person name="Nelson W.C."/>
            <person name="Tallon L.J."/>
            <person name="Jones K.M."/>
            <person name="Ulrich L.E."/>
            <person name="Gonzalez J.M."/>
            <person name="Zhulin I.B."/>
            <person name="Robb F.T."/>
            <person name="Eisen J.A."/>
        </authorList>
    </citation>
    <scope>NUCLEOTIDE SEQUENCE [LARGE SCALE GENOMIC DNA]</scope>
    <source>
        <strain>ATCC BAA-161 / DSM 6008 / Z-2901</strain>
    </source>
</reference>
<accession>Q3A9U5</accession>
<evidence type="ECO:0000255" key="1">
    <source>
        <dbReference type="HAMAP-Rule" id="MF_01368"/>
    </source>
</evidence>
<evidence type="ECO:0000305" key="2"/>